<name>TXE06_LYCSI</name>
<reference key="1">
    <citation type="journal article" date="2010" name="Zoology">
        <title>Transcriptome analysis of the venom glands of the Chinese wolf spider Lycosa singoriensis.</title>
        <authorList>
            <person name="Zhang Y."/>
            <person name="Chen J."/>
            <person name="Tang X."/>
            <person name="Wang F."/>
            <person name="Jiang L."/>
            <person name="Xiong X."/>
            <person name="Wang M."/>
            <person name="Rong M."/>
            <person name="Liu Z."/>
            <person name="Liang S."/>
        </authorList>
    </citation>
    <scope>NUCLEOTIDE SEQUENCE [LARGE SCALE MRNA]</scope>
    <source>
        <tissue>Venom gland</tissue>
    </source>
</reference>
<feature type="signal peptide" evidence="2">
    <location>
        <begin position="1"/>
        <end position="20"/>
    </location>
</feature>
<feature type="chain" id="PRO_0000401882" description="U14-lycotoxin-Ls1c">
    <location>
        <begin position="21"/>
        <end position="87"/>
    </location>
</feature>
<feature type="domain" description="WAP">
    <location>
        <begin position="21"/>
        <end position="66"/>
    </location>
</feature>
<feature type="disulfide bond" evidence="1">
    <location>
        <begin position="24"/>
        <end position="54"/>
    </location>
</feature>
<feature type="disulfide bond" evidence="1">
    <location>
        <begin position="32"/>
        <end position="58"/>
    </location>
</feature>
<feature type="disulfide bond" evidence="1">
    <location>
        <begin position="41"/>
        <end position="53"/>
    </location>
</feature>
<feature type="disulfide bond" evidence="3">
    <location>
        <begin position="42"/>
        <end position="80"/>
    </location>
</feature>
<feature type="disulfide bond" evidence="1">
    <location>
        <begin position="47"/>
        <end position="62"/>
    </location>
</feature>
<dbReference type="EMBL" id="EU926123">
    <property type="protein sequence ID" value="ACI41455.1"/>
    <property type="molecule type" value="mRNA"/>
</dbReference>
<dbReference type="EMBL" id="FM864127">
    <property type="protein sequence ID" value="CAS03724.1"/>
    <property type="molecule type" value="mRNA"/>
</dbReference>
<dbReference type="SMR" id="B6DD39"/>
<dbReference type="ArachnoServer" id="AS001062">
    <property type="toxin name" value="U14-lycotoxin-Ls1c"/>
</dbReference>
<dbReference type="GO" id="GO:0005576">
    <property type="term" value="C:extracellular region"/>
    <property type="evidence" value="ECO:0007669"/>
    <property type="project" value="UniProtKB-SubCell"/>
</dbReference>
<dbReference type="GO" id="GO:0090729">
    <property type="term" value="F:toxin activity"/>
    <property type="evidence" value="ECO:0007669"/>
    <property type="project" value="UniProtKB-KW"/>
</dbReference>
<dbReference type="GO" id="GO:0042742">
    <property type="term" value="P:defense response to bacterium"/>
    <property type="evidence" value="ECO:0007669"/>
    <property type="project" value="UniProtKB-KW"/>
</dbReference>
<dbReference type="InterPro" id="IPR036645">
    <property type="entry name" value="Elafin-like_sf"/>
</dbReference>
<dbReference type="SUPFAM" id="SSF57256">
    <property type="entry name" value="Elafin-like"/>
    <property type="match status" value="1"/>
</dbReference>
<evidence type="ECO:0000250" key="1"/>
<evidence type="ECO:0000255" key="2"/>
<evidence type="ECO:0000305" key="3"/>
<protein>
    <recommendedName>
        <fullName>U14-lycotoxin-Ls1c</fullName>
    </recommendedName>
    <alternativeName>
        <fullName>Toxin-like structure LSTX-N6</fullName>
    </alternativeName>
</protein>
<sequence>MNSKVFAVLLLLALLTCILSEKYCPTPRNTSCKKMNIKNNCCRDSDCTSNAFCCAEPCGNFCHKASDKPGGRRVDPNASCQTGYVYW</sequence>
<accession>B6DD39</accession>
<keyword id="KW-0044">Antibiotic</keyword>
<keyword id="KW-0929">Antimicrobial</keyword>
<keyword id="KW-1015">Disulfide bond</keyword>
<keyword id="KW-0964">Secreted</keyword>
<keyword id="KW-0732">Signal</keyword>
<keyword id="KW-0800">Toxin</keyword>
<comment type="function">
    <text evidence="1">Has antibacterial activity.</text>
</comment>
<comment type="subcellular location">
    <subcellularLocation>
        <location evidence="1">Secreted</location>
    </subcellularLocation>
</comment>
<comment type="tissue specificity">
    <text>Expressed by the venom gland.</text>
</comment>
<comment type="PTM">
    <text evidence="3">Contains 5 disulfide bonds.</text>
</comment>
<comment type="similarity">
    <text evidence="3">Belongs to the venom protein 11 family. 01 (wap-1) subfamily.</text>
</comment>
<organism>
    <name type="scientific">Lycosa singoriensis</name>
    <name type="common">Wolf spider</name>
    <name type="synonym">Aranea singoriensis</name>
    <dbReference type="NCBI Taxonomy" id="434756"/>
    <lineage>
        <taxon>Eukaryota</taxon>
        <taxon>Metazoa</taxon>
        <taxon>Ecdysozoa</taxon>
        <taxon>Arthropoda</taxon>
        <taxon>Chelicerata</taxon>
        <taxon>Arachnida</taxon>
        <taxon>Araneae</taxon>
        <taxon>Araneomorphae</taxon>
        <taxon>Entelegynae</taxon>
        <taxon>Lycosoidea</taxon>
        <taxon>Lycosidae</taxon>
        <taxon>Lycosa</taxon>
    </lineage>
</organism>
<proteinExistence type="evidence at transcript level"/>